<accession>O27679</accession>
<keyword id="KW-0963">Cytoplasm</keyword>
<keyword id="KW-0255">Endonuclease</keyword>
<keyword id="KW-0378">Hydrolase</keyword>
<keyword id="KW-0479">Metal-binding</keyword>
<keyword id="KW-0540">Nuclease</keyword>
<keyword id="KW-1185">Reference proteome</keyword>
<gene>
    <name evidence="1" type="primary">pelA</name>
    <name type="ordered locus">MTH_1642</name>
</gene>
<organism>
    <name type="scientific">Methanothermobacter thermautotrophicus (strain ATCC 29096 / DSM 1053 / JCM 10044 / NBRC 100330 / Delta H)</name>
    <name type="common">Methanobacterium thermoautotrophicum</name>
    <dbReference type="NCBI Taxonomy" id="187420"/>
    <lineage>
        <taxon>Archaea</taxon>
        <taxon>Methanobacteriati</taxon>
        <taxon>Methanobacteriota</taxon>
        <taxon>Methanomada group</taxon>
        <taxon>Methanobacteria</taxon>
        <taxon>Methanobacteriales</taxon>
        <taxon>Methanobacteriaceae</taxon>
        <taxon>Methanothermobacter</taxon>
    </lineage>
</organism>
<name>PELO_METTH</name>
<protein>
    <recommendedName>
        <fullName evidence="1">Protein pelota homolog</fullName>
        <ecNumber evidence="1">3.1.-.-</ecNumber>
    </recommendedName>
</protein>
<comment type="function">
    <text evidence="1">May function in recognizing stalled ribosomes, interact with stem-loop structures in stalled mRNA molecules, and effect endonucleolytic cleavage of the mRNA. May play a role in the release non-functional ribosomes and degradation of damaged mRNAs. Has endoribonuclease activity.</text>
</comment>
<comment type="cofactor">
    <cofactor evidence="1">
        <name>a divalent metal cation</name>
        <dbReference type="ChEBI" id="CHEBI:60240"/>
    </cofactor>
</comment>
<comment type="subunit">
    <text evidence="1">Monomer.</text>
</comment>
<comment type="subcellular location">
    <subcellularLocation>
        <location evidence="1">Cytoplasm</location>
    </subcellularLocation>
</comment>
<comment type="domain">
    <text evidence="1">The N-terminal domain has the RNA-binding Sm fold. It harbors the endoribonuclease activity.</text>
</comment>
<comment type="similarity">
    <text evidence="1">Belongs to the eukaryotic release factor 1 family. Pelota subfamily.</text>
</comment>
<comment type="sequence caution" evidence="2">
    <conflict type="erroneous initiation">
        <sequence resource="EMBL-CDS" id="AAB86115"/>
    </conflict>
</comment>
<feature type="chain" id="PRO_0000361791" description="Protein pelota homolog">
    <location>
        <begin position="1"/>
        <end position="353"/>
    </location>
</feature>
<reference key="1">
    <citation type="journal article" date="1997" name="J. Bacteriol.">
        <title>Complete genome sequence of Methanobacterium thermoautotrophicum deltaH: functional analysis and comparative genomics.</title>
        <authorList>
            <person name="Smith D.R."/>
            <person name="Doucette-Stamm L.A."/>
            <person name="Deloughery C."/>
            <person name="Lee H.-M."/>
            <person name="Dubois J."/>
            <person name="Aldredge T."/>
            <person name="Bashirzadeh R."/>
            <person name="Blakely D."/>
            <person name="Cook R."/>
            <person name="Gilbert K."/>
            <person name="Harrison D."/>
            <person name="Hoang L."/>
            <person name="Keagle P."/>
            <person name="Lumm W."/>
            <person name="Pothier B."/>
            <person name="Qiu D."/>
            <person name="Spadafora R."/>
            <person name="Vicare R."/>
            <person name="Wang Y."/>
            <person name="Wierzbowski J."/>
            <person name="Gibson R."/>
            <person name="Jiwani N."/>
            <person name="Caruso A."/>
            <person name="Bush D."/>
            <person name="Safer H."/>
            <person name="Patwell D."/>
            <person name="Prabhakar S."/>
            <person name="McDougall S."/>
            <person name="Shimer G."/>
            <person name="Goyal A."/>
            <person name="Pietrovski S."/>
            <person name="Church G.M."/>
            <person name="Daniels C.J."/>
            <person name="Mao J.-I."/>
            <person name="Rice P."/>
            <person name="Noelling J."/>
            <person name="Reeve J.N."/>
        </authorList>
    </citation>
    <scope>NUCLEOTIDE SEQUENCE [LARGE SCALE GENOMIC DNA]</scope>
    <source>
        <strain>ATCC 29096 / DSM 1053 / JCM 10044 / NBRC 100330 / Delta H</strain>
    </source>
</reference>
<proteinExistence type="inferred from homology"/>
<dbReference type="EC" id="3.1.-.-" evidence="1"/>
<dbReference type="EMBL" id="AE000666">
    <property type="protein sequence ID" value="AAB86115.1"/>
    <property type="status" value="ALT_INIT"/>
    <property type="molecule type" value="Genomic_DNA"/>
</dbReference>
<dbReference type="PIR" id="E69086">
    <property type="entry name" value="E69086"/>
</dbReference>
<dbReference type="RefSeq" id="WP_048061107.1">
    <property type="nucleotide sequence ID" value="NC_000916.1"/>
</dbReference>
<dbReference type="SMR" id="O27679"/>
<dbReference type="FunCoup" id="O27679">
    <property type="interactions" value="97"/>
</dbReference>
<dbReference type="STRING" id="187420.MTH_1642"/>
<dbReference type="PaxDb" id="187420-MTH_1642"/>
<dbReference type="EnsemblBacteria" id="AAB86115">
    <property type="protein sequence ID" value="AAB86115"/>
    <property type="gene ID" value="MTH_1642"/>
</dbReference>
<dbReference type="KEGG" id="mth:MTH_1642"/>
<dbReference type="PATRIC" id="fig|187420.15.peg.1605"/>
<dbReference type="HOGENOM" id="CLU_023334_0_0_2"/>
<dbReference type="InParanoid" id="O27679"/>
<dbReference type="Proteomes" id="UP000005223">
    <property type="component" value="Chromosome"/>
</dbReference>
<dbReference type="GO" id="GO:0005737">
    <property type="term" value="C:cytoplasm"/>
    <property type="evidence" value="ECO:0007669"/>
    <property type="project" value="UniProtKB-SubCell"/>
</dbReference>
<dbReference type="GO" id="GO:0004519">
    <property type="term" value="F:endonuclease activity"/>
    <property type="evidence" value="ECO:0007669"/>
    <property type="project" value="UniProtKB-UniRule"/>
</dbReference>
<dbReference type="GO" id="GO:0046872">
    <property type="term" value="F:metal ion binding"/>
    <property type="evidence" value="ECO:0007669"/>
    <property type="project" value="UniProtKB-UniRule"/>
</dbReference>
<dbReference type="GO" id="GO:0070651">
    <property type="term" value="P:nonfunctional rRNA decay"/>
    <property type="evidence" value="ECO:0007669"/>
    <property type="project" value="TreeGrafter"/>
</dbReference>
<dbReference type="GO" id="GO:0070966">
    <property type="term" value="P:nuclear-transcribed mRNA catabolic process, no-go decay"/>
    <property type="evidence" value="ECO:0007669"/>
    <property type="project" value="InterPro"/>
</dbReference>
<dbReference type="GO" id="GO:0070481">
    <property type="term" value="P:nuclear-transcribed mRNA catabolic process, non-stop decay"/>
    <property type="evidence" value="ECO:0007669"/>
    <property type="project" value="InterPro"/>
</dbReference>
<dbReference type="GO" id="GO:0032790">
    <property type="term" value="P:ribosome disassembly"/>
    <property type="evidence" value="ECO:0007669"/>
    <property type="project" value="TreeGrafter"/>
</dbReference>
<dbReference type="GO" id="GO:0071025">
    <property type="term" value="P:RNA surveillance"/>
    <property type="evidence" value="ECO:0007669"/>
    <property type="project" value="InterPro"/>
</dbReference>
<dbReference type="Gene3D" id="3.30.1330.30">
    <property type="match status" value="1"/>
</dbReference>
<dbReference type="Gene3D" id="3.30.420.60">
    <property type="entry name" value="eRF1 domain 2"/>
    <property type="match status" value="1"/>
</dbReference>
<dbReference type="Gene3D" id="2.30.30.870">
    <property type="entry name" value="Pelota, domain A"/>
    <property type="match status" value="1"/>
</dbReference>
<dbReference type="HAMAP" id="MF_01853">
    <property type="entry name" value="PelO"/>
    <property type="match status" value="1"/>
</dbReference>
<dbReference type="InterPro" id="IPR042226">
    <property type="entry name" value="eFR1_2_sf"/>
</dbReference>
<dbReference type="InterPro" id="IPR005140">
    <property type="entry name" value="eRF1_1_Pelota"/>
</dbReference>
<dbReference type="InterPro" id="IPR005141">
    <property type="entry name" value="eRF1_2"/>
</dbReference>
<dbReference type="InterPro" id="IPR005142">
    <property type="entry name" value="eRF1_3"/>
</dbReference>
<dbReference type="InterPro" id="IPR038069">
    <property type="entry name" value="Pelota/DOM34_N"/>
</dbReference>
<dbReference type="InterPro" id="IPR023521">
    <property type="entry name" value="Pelota_arc"/>
</dbReference>
<dbReference type="InterPro" id="IPR029064">
    <property type="entry name" value="Ribosomal_eL30-like_sf"/>
</dbReference>
<dbReference type="InterPro" id="IPR004405">
    <property type="entry name" value="Transl-rel_pelota"/>
</dbReference>
<dbReference type="NCBIfam" id="TIGR00111">
    <property type="entry name" value="pelota"/>
    <property type="match status" value="1"/>
</dbReference>
<dbReference type="PANTHER" id="PTHR10853">
    <property type="entry name" value="PELOTA"/>
    <property type="match status" value="1"/>
</dbReference>
<dbReference type="PANTHER" id="PTHR10853:SF0">
    <property type="entry name" value="PROTEIN PELOTA HOMOLOG"/>
    <property type="match status" value="1"/>
</dbReference>
<dbReference type="Pfam" id="PF03463">
    <property type="entry name" value="eRF1_1"/>
    <property type="match status" value="1"/>
</dbReference>
<dbReference type="Pfam" id="PF03464">
    <property type="entry name" value="eRF1_2"/>
    <property type="match status" value="1"/>
</dbReference>
<dbReference type="Pfam" id="PF03465">
    <property type="entry name" value="eRF1_3"/>
    <property type="match status" value="1"/>
</dbReference>
<dbReference type="SMART" id="SM01194">
    <property type="entry name" value="eRF1_1"/>
    <property type="match status" value="1"/>
</dbReference>
<dbReference type="SUPFAM" id="SSF159065">
    <property type="entry name" value="Dom34/Pelota N-terminal domain-like"/>
    <property type="match status" value="1"/>
</dbReference>
<dbReference type="SUPFAM" id="SSF55315">
    <property type="entry name" value="L30e-like"/>
    <property type="match status" value="1"/>
</dbReference>
<dbReference type="SUPFAM" id="SSF53137">
    <property type="entry name" value="Translational machinery components"/>
    <property type="match status" value="1"/>
</dbReference>
<evidence type="ECO:0000255" key="1">
    <source>
        <dbReference type="HAMAP-Rule" id="MF_01853"/>
    </source>
</evidence>
<evidence type="ECO:0000305" key="2"/>
<sequence>MRIVEEDEKNGVIELVPETLDDLWHLSHIIEEGDLLSARTTRRIQDTSGEKIRSDRGVKKTFYLGIRVETVSFHIYTGRLRATGVIERGPEDLVPMGSHHTLEVKLNTPLRIQKEHWSRWTLKRLRMAVRASKNLKAIILVMEDDVAELGLIRQYGVEYRGPITGHIPGKRIQQRDRGKLRREFYESIVESLQKYGDLETIIIAGPGFYKSDFYDYLMERYPEIAKKAVLENTGTGGRAGISEVLRKGTVERVSSEKRIASEIRNVNEFLEKLARDPDSVVYGKVEVMDAINMGAVEKLLVLDRVVSREDIEGYLDMVESMGGSVVLISSEHEGGKQLESLGGLAGILRFKIQ</sequence>